<evidence type="ECO:0000255" key="1">
    <source>
        <dbReference type="HAMAP-Rule" id="MF_00096"/>
    </source>
</evidence>
<name>MUTS_SOLUE</name>
<proteinExistence type="inferred from homology"/>
<sequence>MSDASTPLMRQYNSIKEQVPNALLMFRLGDFYELFFEDAVTAARELEITLTARNKEKGNAIPMCGVPYHAAEGYISRLIQKGFRVAICDQVEDAKLAKKLVRREITRVVTPGTAMDSNLVRSRENNFLAAVGRSGSRSAVAHVDVSTGEFRVTEMEPEEVAGALEHLGAREVLFPGDLPLLTGEDRSGLRFVRTELEDWVFTHDYSDRTLRDHFKLLSLDGCGLANRAAAIGAAGAILHYLRDTQRAALDHLDRPTYYDRADSMVLDSVTVRNLELIEPLFAADAGGIHAQPTVLGVLDQTLTGMGGRLLRQRLLRPSMNRAEIEQRLDAVGELQQQTILRAELRKQLSGILDLERLLAKVTLGSAGPRDVLALGRSLEKIPALKRCFDTQQAARLRNLHDRLDELADVASLILDCISDEPPLNLVDGGTIRAGFHPELDELRDLSQNGKQYIAQIEARERQRTGIGSLKVRFNNVFGYYIEITRANQHLAPADYERKQTLANAERFTTPELKDYERKVLDAEDKILTLEKELFSDVRKRAAAHAQRIRAAAAAVAELDVTASLAQVAAENRYQRPCFSDSGEMRIMAGRHPVIERLTEQEAGRFIPNDLYLNDSTDLLAIITGPNMGGKSTYLRQAALIAILAQIGSFVPAESASLPVIDRIFTRIGASDNLARGRSTFMVEMTETAVILNTATPRSFIVLDEVGRGTATYDGLALAWAVVEYIHQRTRAKTLFATHYHELTELAEQLSGVRNLMVSVKEAGDHIIFLRKVEPGKADRSYGIEVARLAGLPISVIERARDVLKLHERTEHAVSGELVKSEDHGPVQIQMFEPVGYGIAERIRAINVDELRPIEALQLLSELQKELKRS</sequence>
<reference key="1">
    <citation type="journal article" date="2009" name="Appl. Environ. Microbiol.">
        <title>Three genomes from the phylum Acidobacteria provide insight into the lifestyles of these microorganisms in soils.</title>
        <authorList>
            <person name="Ward N.L."/>
            <person name="Challacombe J.F."/>
            <person name="Janssen P.H."/>
            <person name="Henrissat B."/>
            <person name="Coutinho P.M."/>
            <person name="Wu M."/>
            <person name="Xie G."/>
            <person name="Haft D.H."/>
            <person name="Sait M."/>
            <person name="Badger J."/>
            <person name="Barabote R.D."/>
            <person name="Bradley B."/>
            <person name="Brettin T.S."/>
            <person name="Brinkac L.M."/>
            <person name="Bruce D."/>
            <person name="Creasy T."/>
            <person name="Daugherty S.C."/>
            <person name="Davidsen T.M."/>
            <person name="DeBoy R.T."/>
            <person name="Detter J.C."/>
            <person name="Dodson R.J."/>
            <person name="Durkin A.S."/>
            <person name="Ganapathy A."/>
            <person name="Gwinn-Giglio M."/>
            <person name="Han C.S."/>
            <person name="Khouri H."/>
            <person name="Kiss H."/>
            <person name="Kothari S.P."/>
            <person name="Madupu R."/>
            <person name="Nelson K.E."/>
            <person name="Nelson W.C."/>
            <person name="Paulsen I."/>
            <person name="Penn K."/>
            <person name="Ren Q."/>
            <person name="Rosovitz M.J."/>
            <person name="Selengut J.D."/>
            <person name="Shrivastava S."/>
            <person name="Sullivan S.A."/>
            <person name="Tapia R."/>
            <person name="Thompson L.S."/>
            <person name="Watkins K.L."/>
            <person name="Yang Q."/>
            <person name="Yu C."/>
            <person name="Zafar N."/>
            <person name="Zhou L."/>
            <person name="Kuske C.R."/>
        </authorList>
    </citation>
    <scope>NUCLEOTIDE SEQUENCE [LARGE SCALE GENOMIC DNA]</scope>
    <source>
        <strain>Ellin6076</strain>
    </source>
</reference>
<keyword id="KW-0067">ATP-binding</keyword>
<keyword id="KW-0227">DNA damage</keyword>
<keyword id="KW-0234">DNA repair</keyword>
<keyword id="KW-0238">DNA-binding</keyword>
<keyword id="KW-0547">Nucleotide-binding</keyword>
<organism>
    <name type="scientific">Solibacter usitatus (strain Ellin6076)</name>
    <dbReference type="NCBI Taxonomy" id="234267"/>
    <lineage>
        <taxon>Bacteria</taxon>
        <taxon>Pseudomonadati</taxon>
        <taxon>Acidobacteriota</taxon>
        <taxon>Terriglobia</taxon>
        <taxon>Bryobacterales</taxon>
        <taxon>Solibacteraceae</taxon>
        <taxon>Candidatus Solibacter</taxon>
    </lineage>
</organism>
<gene>
    <name evidence="1" type="primary">mutS</name>
    <name type="ordered locus">Acid_4760</name>
</gene>
<comment type="function">
    <text evidence="1">This protein is involved in the repair of mismatches in DNA. It is possible that it carries out the mismatch recognition step. This protein has a weak ATPase activity.</text>
</comment>
<comment type="similarity">
    <text evidence="1">Belongs to the DNA mismatch repair MutS family.</text>
</comment>
<dbReference type="EMBL" id="CP000473">
    <property type="protein sequence ID" value="ABJ85719.1"/>
    <property type="molecule type" value="Genomic_DNA"/>
</dbReference>
<dbReference type="SMR" id="Q01X96"/>
<dbReference type="FunCoup" id="Q01X96">
    <property type="interactions" value="530"/>
</dbReference>
<dbReference type="STRING" id="234267.Acid_4760"/>
<dbReference type="KEGG" id="sus:Acid_4760"/>
<dbReference type="eggNOG" id="COG0249">
    <property type="taxonomic scope" value="Bacteria"/>
</dbReference>
<dbReference type="HOGENOM" id="CLU_002472_4_0_0"/>
<dbReference type="InParanoid" id="Q01X96"/>
<dbReference type="OrthoDB" id="9802448at2"/>
<dbReference type="GO" id="GO:0005829">
    <property type="term" value="C:cytosol"/>
    <property type="evidence" value="ECO:0007669"/>
    <property type="project" value="TreeGrafter"/>
</dbReference>
<dbReference type="GO" id="GO:0005524">
    <property type="term" value="F:ATP binding"/>
    <property type="evidence" value="ECO:0007669"/>
    <property type="project" value="UniProtKB-UniRule"/>
</dbReference>
<dbReference type="GO" id="GO:0140664">
    <property type="term" value="F:ATP-dependent DNA damage sensor activity"/>
    <property type="evidence" value="ECO:0007669"/>
    <property type="project" value="InterPro"/>
</dbReference>
<dbReference type="GO" id="GO:0003684">
    <property type="term" value="F:damaged DNA binding"/>
    <property type="evidence" value="ECO:0007669"/>
    <property type="project" value="UniProtKB-UniRule"/>
</dbReference>
<dbReference type="GO" id="GO:0030983">
    <property type="term" value="F:mismatched DNA binding"/>
    <property type="evidence" value="ECO:0007669"/>
    <property type="project" value="InterPro"/>
</dbReference>
<dbReference type="GO" id="GO:0006298">
    <property type="term" value="P:mismatch repair"/>
    <property type="evidence" value="ECO:0007669"/>
    <property type="project" value="UniProtKB-UniRule"/>
</dbReference>
<dbReference type="CDD" id="cd03284">
    <property type="entry name" value="ABC_MutS1"/>
    <property type="match status" value="1"/>
</dbReference>
<dbReference type="FunFam" id="3.40.1170.10:FF:000001">
    <property type="entry name" value="DNA mismatch repair protein MutS"/>
    <property type="match status" value="1"/>
</dbReference>
<dbReference type="FunFam" id="3.40.50.300:FF:000870">
    <property type="entry name" value="MutS protein homolog 4"/>
    <property type="match status" value="1"/>
</dbReference>
<dbReference type="Gene3D" id="1.10.1420.10">
    <property type="match status" value="2"/>
</dbReference>
<dbReference type="Gene3D" id="3.40.1170.10">
    <property type="entry name" value="DNA repair protein MutS, domain I"/>
    <property type="match status" value="1"/>
</dbReference>
<dbReference type="Gene3D" id="3.30.420.110">
    <property type="entry name" value="MutS, connector domain"/>
    <property type="match status" value="1"/>
</dbReference>
<dbReference type="Gene3D" id="3.40.50.300">
    <property type="entry name" value="P-loop containing nucleotide triphosphate hydrolases"/>
    <property type="match status" value="1"/>
</dbReference>
<dbReference type="HAMAP" id="MF_00096">
    <property type="entry name" value="MutS"/>
    <property type="match status" value="1"/>
</dbReference>
<dbReference type="InterPro" id="IPR005748">
    <property type="entry name" value="DNA_mismatch_repair_MutS"/>
</dbReference>
<dbReference type="InterPro" id="IPR007695">
    <property type="entry name" value="DNA_mismatch_repair_MutS-lik_N"/>
</dbReference>
<dbReference type="InterPro" id="IPR017261">
    <property type="entry name" value="DNA_mismatch_repair_MutS/MSH"/>
</dbReference>
<dbReference type="InterPro" id="IPR000432">
    <property type="entry name" value="DNA_mismatch_repair_MutS_C"/>
</dbReference>
<dbReference type="InterPro" id="IPR007861">
    <property type="entry name" value="DNA_mismatch_repair_MutS_clamp"/>
</dbReference>
<dbReference type="InterPro" id="IPR007696">
    <property type="entry name" value="DNA_mismatch_repair_MutS_core"/>
</dbReference>
<dbReference type="InterPro" id="IPR016151">
    <property type="entry name" value="DNA_mismatch_repair_MutS_N"/>
</dbReference>
<dbReference type="InterPro" id="IPR036187">
    <property type="entry name" value="DNA_mismatch_repair_MutS_sf"/>
</dbReference>
<dbReference type="InterPro" id="IPR007860">
    <property type="entry name" value="DNA_mmatch_repair_MutS_con_dom"/>
</dbReference>
<dbReference type="InterPro" id="IPR045076">
    <property type="entry name" value="MutS"/>
</dbReference>
<dbReference type="InterPro" id="IPR036678">
    <property type="entry name" value="MutS_con_dom_sf"/>
</dbReference>
<dbReference type="InterPro" id="IPR027417">
    <property type="entry name" value="P-loop_NTPase"/>
</dbReference>
<dbReference type="NCBIfam" id="TIGR01070">
    <property type="entry name" value="mutS1"/>
    <property type="match status" value="1"/>
</dbReference>
<dbReference type="NCBIfam" id="NF003810">
    <property type="entry name" value="PRK05399.1"/>
    <property type="match status" value="1"/>
</dbReference>
<dbReference type="PANTHER" id="PTHR11361:SF34">
    <property type="entry name" value="DNA MISMATCH REPAIR PROTEIN MSH1, MITOCHONDRIAL"/>
    <property type="match status" value="1"/>
</dbReference>
<dbReference type="PANTHER" id="PTHR11361">
    <property type="entry name" value="DNA MISMATCH REPAIR PROTEIN MUTS FAMILY MEMBER"/>
    <property type="match status" value="1"/>
</dbReference>
<dbReference type="Pfam" id="PF01624">
    <property type="entry name" value="MutS_I"/>
    <property type="match status" value="1"/>
</dbReference>
<dbReference type="Pfam" id="PF05188">
    <property type="entry name" value="MutS_II"/>
    <property type="match status" value="1"/>
</dbReference>
<dbReference type="Pfam" id="PF05192">
    <property type="entry name" value="MutS_III"/>
    <property type="match status" value="1"/>
</dbReference>
<dbReference type="Pfam" id="PF05190">
    <property type="entry name" value="MutS_IV"/>
    <property type="match status" value="1"/>
</dbReference>
<dbReference type="Pfam" id="PF00488">
    <property type="entry name" value="MutS_V"/>
    <property type="match status" value="1"/>
</dbReference>
<dbReference type="PIRSF" id="PIRSF037677">
    <property type="entry name" value="DNA_mis_repair_Msh6"/>
    <property type="match status" value="1"/>
</dbReference>
<dbReference type="SMART" id="SM00534">
    <property type="entry name" value="MUTSac"/>
    <property type="match status" value="1"/>
</dbReference>
<dbReference type="SMART" id="SM00533">
    <property type="entry name" value="MUTSd"/>
    <property type="match status" value="1"/>
</dbReference>
<dbReference type="SUPFAM" id="SSF55271">
    <property type="entry name" value="DNA repair protein MutS, domain I"/>
    <property type="match status" value="1"/>
</dbReference>
<dbReference type="SUPFAM" id="SSF53150">
    <property type="entry name" value="DNA repair protein MutS, domain II"/>
    <property type="match status" value="1"/>
</dbReference>
<dbReference type="SUPFAM" id="SSF48334">
    <property type="entry name" value="DNA repair protein MutS, domain III"/>
    <property type="match status" value="1"/>
</dbReference>
<dbReference type="SUPFAM" id="SSF52540">
    <property type="entry name" value="P-loop containing nucleoside triphosphate hydrolases"/>
    <property type="match status" value="1"/>
</dbReference>
<dbReference type="PROSITE" id="PS00486">
    <property type="entry name" value="DNA_MISMATCH_REPAIR_2"/>
    <property type="match status" value="1"/>
</dbReference>
<protein>
    <recommendedName>
        <fullName evidence="1">DNA mismatch repair protein MutS</fullName>
    </recommendedName>
</protein>
<accession>Q01X96</accession>
<feature type="chain" id="PRO_0000335226" description="DNA mismatch repair protein MutS">
    <location>
        <begin position="1"/>
        <end position="869"/>
    </location>
</feature>
<feature type="binding site" evidence="1">
    <location>
        <begin position="624"/>
        <end position="631"/>
    </location>
    <ligand>
        <name>ATP</name>
        <dbReference type="ChEBI" id="CHEBI:30616"/>
    </ligand>
</feature>